<comment type="function">
    <text evidence="1">This protein binds specifically to 23S rRNA; its binding is stimulated by other ribosomal proteins, e.g. L4, L17, and L20. It is important during the early stages of 50S assembly. It makes multiple contacts with different domains of the 23S rRNA in the assembled 50S subunit and ribosome (By similarity).</text>
</comment>
<comment type="function">
    <text evidence="1">The globular domain of the protein is located near the polypeptide exit tunnel on the outside of the subunit, while an extended beta-hairpin is found that lines the wall of the exit tunnel in the center of the 70S ribosome.</text>
</comment>
<comment type="subunit">
    <text evidence="1">Part of the 50S ribosomal subunit.</text>
</comment>
<comment type="similarity">
    <text evidence="1">Belongs to the universal ribosomal protein uL22 family.</text>
</comment>
<organism>
    <name type="scientific">Streptococcus pneumoniae serotype 2 (strain D39 / NCTC 7466)</name>
    <dbReference type="NCBI Taxonomy" id="373153"/>
    <lineage>
        <taxon>Bacteria</taxon>
        <taxon>Bacillati</taxon>
        <taxon>Bacillota</taxon>
        <taxon>Bacilli</taxon>
        <taxon>Lactobacillales</taxon>
        <taxon>Streptococcaceae</taxon>
        <taxon>Streptococcus</taxon>
    </lineage>
</organism>
<keyword id="KW-1185">Reference proteome</keyword>
<keyword id="KW-0687">Ribonucleoprotein</keyword>
<keyword id="KW-0689">Ribosomal protein</keyword>
<keyword id="KW-0694">RNA-binding</keyword>
<keyword id="KW-0699">rRNA-binding</keyword>
<protein>
    <recommendedName>
        <fullName evidence="1">Large ribosomal subunit protein uL22</fullName>
    </recommendedName>
    <alternativeName>
        <fullName evidence="2">50S ribosomal protein L22</fullName>
    </alternativeName>
</protein>
<gene>
    <name evidence="1" type="primary">rplV</name>
    <name type="ordered locus">SPD_0198</name>
</gene>
<feature type="chain" id="PRO_1000052660" description="Large ribosomal subunit protein uL22">
    <location>
        <begin position="1"/>
        <end position="114"/>
    </location>
</feature>
<accession>Q04MN1</accession>
<sequence>MAEITSAKAMARTVRVSPRKSRLVLDNIRGKSVADAIAILTFTPNKAAEIILKVLNSAVANAENNFGLDKANLVVSEAFANEGPTMKRFRPRAKGSASPINKRTAHITVAVAEK</sequence>
<reference key="1">
    <citation type="journal article" date="2007" name="J. Bacteriol.">
        <title>Genome sequence of Avery's virulent serotype 2 strain D39 of Streptococcus pneumoniae and comparison with that of unencapsulated laboratory strain R6.</title>
        <authorList>
            <person name="Lanie J.A."/>
            <person name="Ng W.-L."/>
            <person name="Kazmierczak K.M."/>
            <person name="Andrzejewski T.M."/>
            <person name="Davidsen T.M."/>
            <person name="Wayne K.J."/>
            <person name="Tettelin H."/>
            <person name="Glass J.I."/>
            <person name="Winkler M.E."/>
        </authorList>
    </citation>
    <scope>NUCLEOTIDE SEQUENCE [LARGE SCALE GENOMIC DNA]</scope>
    <source>
        <strain>D39 / NCTC 7466</strain>
    </source>
</reference>
<proteinExistence type="inferred from homology"/>
<dbReference type="EMBL" id="CP000410">
    <property type="protein sequence ID" value="ABJ55492.1"/>
    <property type="molecule type" value="Genomic_DNA"/>
</dbReference>
<dbReference type="RefSeq" id="WP_000818137.1">
    <property type="nucleotide sequence ID" value="NZ_JAMLJR010000002.1"/>
</dbReference>
<dbReference type="SMR" id="Q04MN1"/>
<dbReference type="PaxDb" id="373153-SPD_0198"/>
<dbReference type="GeneID" id="93738962"/>
<dbReference type="KEGG" id="spd:SPD_0198"/>
<dbReference type="eggNOG" id="COG0091">
    <property type="taxonomic scope" value="Bacteria"/>
</dbReference>
<dbReference type="HOGENOM" id="CLU_083987_3_3_9"/>
<dbReference type="BioCyc" id="SPNE373153:G1G6V-221-MONOMER"/>
<dbReference type="Proteomes" id="UP000001452">
    <property type="component" value="Chromosome"/>
</dbReference>
<dbReference type="GO" id="GO:0022625">
    <property type="term" value="C:cytosolic large ribosomal subunit"/>
    <property type="evidence" value="ECO:0007669"/>
    <property type="project" value="TreeGrafter"/>
</dbReference>
<dbReference type="GO" id="GO:0019843">
    <property type="term" value="F:rRNA binding"/>
    <property type="evidence" value="ECO:0007669"/>
    <property type="project" value="UniProtKB-UniRule"/>
</dbReference>
<dbReference type="GO" id="GO:0003735">
    <property type="term" value="F:structural constituent of ribosome"/>
    <property type="evidence" value="ECO:0007669"/>
    <property type="project" value="InterPro"/>
</dbReference>
<dbReference type="GO" id="GO:0006412">
    <property type="term" value="P:translation"/>
    <property type="evidence" value="ECO:0007669"/>
    <property type="project" value="UniProtKB-UniRule"/>
</dbReference>
<dbReference type="CDD" id="cd00336">
    <property type="entry name" value="Ribosomal_L22"/>
    <property type="match status" value="1"/>
</dbReference>
<dbReference type="FunFam" id="3.90.470.10:FF:000001">
    <property type="entry name" value="50S ribosomal protein L22"/>
    <property type="match status" value="1"/>
</dbReference>
<dbReference type="Gene3D" id="3.90.470.10">
    <property type="entry name" value="Ribosomal protein L22/L17"/>
    <property type="match status" value="1"/>
</dbReference>
<dbReference type="HAMAP" id="MF_01331_B">
    <property type="entry name" value="Ribosomal_uL22_B"/>
    <property type="match status" value="1"/>
</dbReference>
<dbReference type="InterPro" id="IPR001063">
    <property type="entry name" value="Ribosomal_uL22"/>
</dbReference>
<dbReference type="InterPro" id="IPR005727">
    <property type="entry name" value="Ribosomal_uL22_bac/chlpt-type"/>
</dbReference>
<dbReference type="InterPro" id="IPR047867">
    <property type="entry name" value="Ribosomal_uL22_bac/org-type"/>
</dbReference>
<dbReference type="InterPro" id="IPR018260">
    <property type="entry name" value="Ribosomal_uL22_CS"/>
</dbReference>
<dbReference type="InterPro" id="IPR036394">
    <property type="entry name" value="Ribosomal_uL22_sf"/>
</dbReference>
<dbReference type="NCBIfam" id="TIGR01044">
    <property type="entry name" value="rplV_bact"/>
    <property type="match status" value="1"/>
</dbReference>
<dbReference type="PANTHER" id="PTHR13501">
    <property type="entry name" value="CHLOROPLAST 50S RIBOSOMAL PROTEIN L22-RELATED"/>
    <property type="match status" value="1"/>
</dbReference>
<dbReference type="PANTHER" id="PTHR13501:SF8">
    <property type="entry name" value="LARGE RIBOSOMAL SUBUNIT PROTEIN UL22M"/>
    <property type="match status" value="1"/>
</dbReference>
<dbReference type="Pfam" id="PF00237">
    <property type="entry name" value="Ribosomal_L22"/>
    <property type="match status" value="1"/>
</dbReference>
<dbReference type="SUPFAM" id="SSF54843">
    <property type="entry name" value="Ribosomal protein L22"/>
    <property type="match status" value="1"/>
</dbReference>
<dbReference type="PROSITE" id="PS00464">
    <property type="entry name" value="RIBOSOMAL_L22"/>
    <property type="match status" value="1"/>
</dbReference>
<evidence type="ECO:0000255" key="1">
    <source>
        <dbReference type="HAMAP-Rule" id="MF_01331"/>
    </source>
</evidence>
<evidence type="ECO:0000305" key="2"/>
<name>RL22_STRP2</name>